<proteinExistence type="inferred from homology"/>
<protein>
    <recommendedName>
        <fullName>Minor capsid protein VP2</fullName>
    </recommendedName>
</protein>
<keyword id="KW-1232">Capsid decoration protein</keyword>
<keyword id="KW-0167">Capsid protein</keyword>
<keyword id="KW-1035">Host cytoplasm</keyword>
<keyword id="KW-1185">Reference proteome</keyword>
<keyword id="KW-0946">Virion</keyword>
<name>VP2_VESVA</name>
<evidence type="ECO:0000250" key="1">
    <source>
        <dbReference type="UniProtKB" id="P28711"/>
    </source>
</evidence>
<evidence type="ECO:0000305" key="2"/>
<comment type="function">
    <text evidence="1">Minor structural protein that forms a portal-like structure at a unique three-fold axis of symmetry, following binding to the host receptor. The channel formed by VP2 may allow the delivery of the viral genome through the host endosomal membrane.</text>
</comment>
<comment type="subunit">
    <text evidence="1">Homooligomer. The portal-like structure consists in 12 copies of VP2. Interacts with capsid protein VP1.</text>
</comment>
<comment type="subcellular location">
    <subcellularLocation>
        <location evidence="1">Virion</location>
    </subcellularLocation>
    <subcellularLocation>
        <location evidence="2">Host cytoplasm</location>
    </subcellularLocation>
</comment>
<comment type="domain">
    <text evidence="1">The N-terminus domain points away from the virion surface.</text>
</comment>
<comment type="miscellaneous">
    <text evidence="1">Translated by a ribosomal termination-reinitiation process from the bicistronic mRNA coding for VP1 and VP2.</text>
</comment>
<comment type="similarity">
    <text evidence="2">Belongs to the vesivirus VP2 protein family.</text>
</comment>
<sequence>MNYANFGLDFLNSVANAAVEGKKLDLASRGLQLRSRALDTERDFNYAKLAFERHKFDTNNDLRIYGDAMRIQALRAAGLRINPYSNGRQIYQDEADLANLHSYYSFYKTD</sequence>
<dbReference type="EMBL" id="U76874">
    <property type="protein sequence ID" value="AAC13890.1"/>
    <property type="molecule type" value="Genomic_RNA"/>
</dbReference>
<dbReference type="RefSeq" id="NP_066257.1">
    <property type="nucleotide sequence ID" value="NC_002551.1"/>
</dbReference>
<dbReference type="KEGG" id="vg:911833"/>
<dbReference type="Proteomes" id="UP000007661">
    <property type="component" value="Segment"/>
</dbReference>
<dbReference type="GO" id="GO:0030430">
    <property type="term" value="C:host cell cytoplasm"/>
    <property type="evidence" value="ECO:0007669"/>
    <property type="project" value="UniProtKB-SubCell"/>
</dbReference>
<dbReference type="GO" id="GO:0098021">
    <property type="term" value="C:viral capsid, decoration"/>
    <property type="evidence" value="ECO:0007669"/>
    <property type="project" value="UniProtKB-KW"/>
</dbReference>
<dbReference type="InterPro" id="IPR007996">
    <property type="entry name" value="Vesivirus_VP2"/>
</dbReference>
<dbReference type="Pfam" id="PF05332">
    <property type="entry name" value="Vesi_VP2"/>
    <property type="match status" value="1"/>
</dbReference>
<reference key="1">
    <citation type="journal article" date="1998" name="Virus Res.">
        <title>The capsid protein of vesicular exanthema of swine virus serotype A48: relationship to the capsid protein of other animal caliciviruses.</title>
        <authorList>
            <person name="Neill J.D."/>
            <person name="Meyer R.F."/>
            <person name="Seal B.S."/>
        </authorList>
    </citation>
    <scope>NUCLEOTIDE SEQUENCE [GENOMIC RNA]</scope>
</reference>
<reference key="2">
    <citation type="submission" date="2000-08" db="EMBL/GenBank/DDBJ databases">
        <title>Complete nucleotide sequence of the genomic RNA of vesicular exanthema of swine virus A48.</title>
        <authorList>
            <person name="Neill J.D."/>
            <person name="Seal B.S."/>
            <person name="Ridpath J.F."/>
        </authorList>
    </citation>
    <scope>NUCLEOTIDE SEQUENCE [GENOMIC RNA]</scope>
</reference>
<feature type="chain" id="PRO_0000402466" description="Minor capsid protein VP2">
    <location>
        <begin position="1"/>
        <end position="110"/>
    </location>
</feature>
<accession>P89682</accession>
<organism>
    <name type="scientific">Vesicular exanthema of swine virus serotype A48 (isolate Swine/United States/A48/1948)</name>
    <name type="common">VESV</name>
    <dbReference type="NCBI Taxonomy" id="85617"/>
    <lineage>
        <taxon>Viruses</taxon>
        <taxon>Riboviria</taxon>
        <taxon>Orthornavirae</taxon>
        <taxon>Pisuviricota</taxon>
        <taxon>Pisoniviricetes</taxon>
        <taxon>Picornavirales</taxon>
        <taxon>Caliciviridae</taxon>
        <taxon>Vesivirus</taxon>
        <taxon>Vesicular exanthema of swine virus</taxon>
    </lineage>
</organism>
<organismHost>
    <name type="scientific">Sus scrofa</name>
    <name type="common">Pig</name>
    <dbReference type="NCBI Taxonomy" id="9823"/>
</organismHost>
<gene>
    <name type="ORF">ORF3</name>
</gene>